<evidence type="ECO:0000255" key="1">
    <source>
        <dbReference type="HAMAP-Rule" id="MF_00254"/>
    </source>
</evidence>
<comment type="catalytic activity">
    <reaction evidence="1">
        <text>tRNA(Gly) + glycine + ATP = glycyl-tRNA(Gly) + AMP + diphosphate</text>
        <dbReference type="Rhea" id="RHEA:16013"/>
        <dbReference type="Rhea" id="RHEA-COMP:9664"/>
        <dbReference type="Rhea" id="RHEA-COMP:9683"/>
        <dbReference type="ChEBI" id="CHEBI:30616"/>
        <dbReference type="ChEBI" id="CHEBI:33019"/>
        <dbReference type="ChEBI" id="CHEBI:57305"/>
        <dbReference type="ChEBI" id="CHEBI:78442"/>
        <dbReference type="ChEBI" id="CHEBI:78522"/>
        <dbReference type="ChEBI" id="CHEBI:456215"/>
        <dbReference type="EC" id="6.1.1.14"/>
    </reaction>
</comment>
<comment type="subunit">
    <text evidence="1">Tetramer of two alpha and two beta subunits.</text>
</comment>
<comment type="subcellular location">
    <subcellularLocation>
        <location evidence="1">Cytoplasm</location>
    </subcellularLocation>
</comment>
<comment type="similarity">
    <text evidence="1">Belongs to the class-II aminoacyl-tRNA synthetase family.</text>
</comment>
<gene>
    <name evidence="1" type="primary">glyQ</name>
    <name type="ordered locus">AnaeK_2555</name>
</gene>
<proteinExistence type="inferred from homology"/>
<protein>
    <recommendedName>
        <fullName evidence="1">Glycine--tRNA ligase alpha subunit</fullName>
        <ecNumber evidence="1">6.1.1.14</ecNumber>
    </recommendedName>
    <alternativeName>
        <fullName evidence="1">Glycyl-tRNA synthetase alpha subunit</fullName>
        <shortName evidence="1">GlyRS</shortName>
    </alternativeName>
</protein>
<accession>B4UG88</accession>
<name>SYGA_ANASK</name>
<reference key="1">
    <citation type="submission" date="2008-08" db="EMBL/GenBank/DDBJ databases">
        <title>Complete sequence of Anaeromyxobacter sp. K.</title>
        <authorList>
            <consortium name="US DOE Joint Genome Institute"/>
            <person name="Lucas S."/>
            <person name="Copeland A."/>
            <person name="Lapidus A."/>
            <person name="Glavina del Rio T."/>
            <person name="Dalin E."/>
            <person name="Tice H."/>
            <person name="Bruce D."/>
            <person name="Goodwin L."/>
            <person name="Pitluck S."/>
            <person name="Saunders E."/>
            <person name="Brettin T."/>
            <person name="Detter J.C."/>
            <person name="Han C."/>
            <person name="Larimer F."/>
            <person name="Land M."/>
            <person name="Hauser L."/>
            <person name="Kyrpides N."/>
            <person name="Ovchinnikiva G."/>
            <person name="Beliaev A."/>
        </authorList>
    </citation>
    <scope>NUCLEOTIDE SEQUENCE [LARGE SCALE GENOMIC DNA]</scope>
    <source>
        <strain>K</strain>
    </source>
</reference>
<organism>
    <name type="scientific">Anaeromyxobacter sp. (strain K)</name>
    <dbReference type="NCBI Taxonomy" id="447217"/>
    <lineage>
        <taxon>Bacteria</taxon>
        <taxon>Pseudomonadati</taxon>
        <taxon>Myxococcota</taxon>
        <taxon>Myxococcia</taxon>
        <taxon>Myxococcales</taxon>
        <taxon>Cystobacterineae</taxon>
        <taxon>Anaeromyxobacteraceae</taxon>
        <taxon>Anaeromyxobacter</taxon>
    </lineage>
</organism>
<dbReference type="EC" id="6.1.1.14" evidence="1"/>
<dbReference type="EMBL" id="CP001131">
    <property type="protein sequence ID" value="ACG73780.1"/>
    <property type="molecule type" value="Genomic_DNA"/>
</dbReference>
<dbReference type="RefSeq" id="WP_012526564.1">
    <property type="nucleotide sequence ID" value="NC_011145.1"/>
</dbReference>
<dbReference type="SMR" id="B4UG88"/>
<dbReference type="KEGG" id="ank:AnaeK_2555"/>
<dbReference type="HOGENOM" id="CLU_057066_1_0_7"/>
<dbReference type="OrthoDB" id="9802183at2"/>
<dbReference type="Proteomes" id="UP000001871">
    <property type="component" value="Chromosome"/>
</dbReference>
<dbReference type="GO" id="GO:0005829">
    <property type="term" value="C:cytosol"/>
    <property type="evidence" value="ECO:0007669"/>
    <property type="project" value="TreeGrafter"/>
</dbReference>
<dbReference type="GO" id="GO:0005524">
    <property type="term" value="F:ATP binding"/>
    <property type="evidence" value="ECO:0007669"/>
    <property type="project" value="UniProtKB-UniRule"/>
</dbReference>
<dbReference type="GO" id="GO:0004820">
    <property type="term" value="F:glycine-tRNA ligase activity"/>
    <property type="evidence" value="ECO:0007669"/>
    <property type="project" value="UniProtKB-UniRule"/>
</dbReference>
<dbReference type="GO" id="GO:0006426">
    <property type="term" value="P:glycyl-tRNA aminoacylation"/>
    <property type="evidence" value="ECO:0007669"/>
    <property type="project" value="UniProtKB-UniRule"/>
</dbReference>
<dbReference type="CDD" id="cd00733">
    <property type="entry name" value="GlyRS_alpha_core"/>
    <property type="match status" value="1"/>
</dbReference>
<dbReference type="FunFam" id="3.30.930.10:FF:000006">
    <property type="entry name" value="Glycine--tRNA ligase alpha subunit"/>
    <property type="match status" value="1"/>
</dbReference>
<dbReference type="Gene3D" id="3.30.930.10">
    <property type="entry name" value="Bira Bifunctional Protein, Domain 2"/>
    <property type="match status" value="1"/>
</dbReference>
<dbReference type="Gene3D" id="1.20.58.180">
    <property type="entry name" value="Class II aaRS and biotin synthetases, domain 2"/>
    <property type="match status" value="1"/>
</dbReference>
<dbReference type="HAMAP" id="MF_00254">
    <property type="entry name" value="Gly_tRNA_synth_alpha"/>
    <property type="match status" value="1"/>
</dbReference>
<dbReference type="InterPro" id="IPR045864">
    <property type="entry name" value="aa-tRNA-synth_II/BPL/LPL"/>
</dbReference>
<dbReference type="InterPro" id="IPR006194">
    <property type="entry name" value="Gly-tRNA-synth_heterodimer"/>
</dbReference>
<dbReference type="InterPro" id="IPR002310">
    <property type="entry name" value="Gly-tRNA_ligase_asu"/>
</dbReference>
<dbReference type="NCBIfam" id="TIGR00388">
    <property type="entry name" value="glyQ"/>
    <property type="match status" value="1"/>
</dbReference>
<dbReference type="NCBIfam" id="NF006827">
    <property type="entry name" value="PRK09348.1"/>
    <property type="match status" value="1"/>
</dbReference>
<dbReference type="PANTHER" id="PTHR30075:SF2">
    <property type="entry name" value="GLYCINE--TRNA LIGASE, CHLOROPLASTIC_MITOCHONDRIAL 2"/>
    <property type="match status" value="1"/>
</dbReference>
<dbReference type="PANTHER" id="PTHR30075">
    <property type="entry name" value="GLYCYL-TRNA SYNTHETASE"/>
    <property type="match status" value="1"/>
</dbReference>
<dbReference type="Pfam" id="PF02091">
    <property type="entry name" value="tRNA-synt_2e"/>
    <property type="match status" value="1"/>
</dbReference>
<dbReference type="PRINTS" id="PR01044">
    <property type="entry name" value="TRNASYNTHGA"/>
</dbReference>
<dbReference type="SUPFAM" id="SSF55681">
    <property type="entry name" value="Class II aaRS and biotin synthetases"/>
    <property type="match status" value="1"/>
</dbReference>
<dbReference type="PROSITE" id="PS50861">
    <property type="entry name" value="AA_TRNA_LIGASE_II_GLYAB"/>
    <property type="match status" value="1"/>
</dbReference>
<feature type="chain" id="PRO_1000101175" description="Glycine--tRNA ligase alpha subunit">
    <location>
        <begin position="1"/>
        <end position="309"/>
    </location>
</feature>
<keyword id="KW-0030">Aminoacyl-tRNA synthetase</keyword>
<keyword id="KW-0067">ATP-binding</keyword>
<keyword id="KW-0963">Cytoplasm</keyword>
<keyword id="KW-0436">Ligase</keyword>
<keyword id="KW-0547">Nucleotide-binding</keyword>
<keyword id="KW-0648">Protein biosynthesis</keyword>
<sequence>MYFQDLILKLQTYWASRNCILAQGYDQEVGAGTMNPSTFLRVLGPEPWNVAYVEPSRRPADGRYGENPNRLYQHHQFQVILKPNPPDVQELYLGSLRAIGIDPREHDIRFVEDDWESPTLGAWGLGWEVWCDGMEITQYTYFQQAGGFEVRPVAAELTYGLERIAMYLQDVENVFDVEWVKGVKYREVFHRNEVEMSTYSFQASDPKMLFGLFDTYEAECKRLNGLKLPLPAYDYCLKCSHTFNNLDARGAISVTERAAYIGRVRALAHECARGYLDSREALGFPLLPPADRKQAVEAARAAREARESR</sequence>